<name>RL22_CUPMC</name>
<proteinExistence type="inferred from homology"/>
<reference key="1">
    <citation type="journal article" date="2010" name="PLoS ONE">
        <title>The complete genome sequence of Cupriavidus metallidurans strain CH34, a master survivalist in harsh and anthropogenic environments.</title>
        <authorList>
            <person name="Janssen P.J."/>
            <person name="Van Houdt R."/>
            <person name="Moors H."/>
            <person name="Monsieurs P."/>
            <person name="Morin N."/>
            <person name="Michaux A."/>
            <person name="Benotmane M.A."/>
            <person name="Leys N."/>
            <person name="Vallaeys T."/>
            <person name="Lapidus A."/>
            <person name="Monchy S."/>
            <person name="Medigue C."/>
            <person name="Taghavi S."/>
            <person name="McCorkle S."/>
            <person name="Dunn J."/>
            <person name="van der Lelie D."/>
            <person name="Mergeay M."/>
        </authorList>
    </citation>
    <scope>NUCLEOTIDE SEQUENCE [LARGE SCALE GENOMIC DNA]</scope>
    <source>
        <strain>ATCC 43123 / DSM 2839 / NBRC 102507 / CH34</strain>
    </source>
</reference>
<organism>
    <name type="scientific">Cupriavidus metallidurans (strain ATCC 43123 / DSM 2839 / NBRC 102507 / CH34)</name>
    <name type="common">Ralstonia metallidurans</name>
    <dbReference type="NCBI Taxonomy" id="266264"/>
    <lineage>
        <taxon>Bacteria</taxon>
        <taxon>Pseudomonadati</taxon>
        <taxon>Pseudomonadota</taxon>
        <taxon>Betaproteobacteria</taxon>
        <taxon>Burkholderiales</taxon>
        <taxon>Burkholderiaceae</taxon>
        <taxon>Cupriavidus</taxon>
    </lineage>
</organism>
<gene>
    <name evidence="1" type="primary">rplV</name>
    <name type="ordered locus">Rmet_3312</name>
</gene>
<comment type="function">
    <text evidence="1">This protein binds specifically to 23S rRNA; its binding is stimulated by other ribosomal proteins, e.g. L4, L17, and L20. It is important during the early stages of 50S assembly. It makes multiple contacts with different domains of the 23S rRNA in the assembled 50S subunit and ribosome (By similarity).</text>
</comment>
<comment type="function">
    <text evidence="1">The globular domain of the protein is located near the polypeptide exit tunnel on the outside of the subunit, while an extended beta-hairpin is found that lines the wall of the exit tunnel in the center of the 70S ribosome.</text>
</comment>
<comment type="subunit">
    <text evidence="1">Part of the 50S ribosomal subunit.</text>
</comment>
<comment type="similarity">
    <text evidence="1">Belongs to the universal ribosomal protein uL22 family.</text>
</comment>
<feature type="chain" id="PRO_1000052634" description="Large ribosomal subunit protein uL22">
    <location>
        <begin position="1"/>
        <end position="109"/>
    </location>
</feature>
<accession>Q1LI42</accession>
<protein>
    <recommendedName>
        <fullName evidence="1">Large ribosomal subunit protein uL22</fullName>
    </recommendedName>
    <alternativeName>
        <fullName evidence="2">50S ribosomal protein L22</fullName>
    </alternativeName>
</protein>
<evidence type="ECO:0000255" key="1">
    <source>
        <dbReference type="HAMAP-Rule" id="MF_01331"/>
    </source>
</evidence>
<evidence type="ECO:0000305" key="2"/>
<keyword id="KW-1185">Reference proteome</keyword>
<keyword id="KW-0687">Ribonucleoprotein</keyword>
<keyword id="KW-0689">Ribosomal protein</keyword>
<keyword id="KW-0694">RNA-binding</keyword>
<keyword id="KW-0699">rRNA-binding</keyword>
<dbReference type="EMBL" id="CP000352">
    <property type="protein sequence ID" value="ABF10184.1"/>
    <property type="molecule type" value="Genomic_DNA"/>
</dbReference>
<dbReference type="RefSeq" id="WP_008642930.1">
    <property type="nucleotide sequence ID" value="NC_007973.1"/>
</dbReference>
<dbReference type="SMR" id="Q1LI42"/>
<dbReference type="STRING" id="266264.Rmet_3312"/>
<dbReference type="GeneID" id="60826605"/>
<dbReference type="KEGG" id="rme:Rmet_3312"/>
<dbReference type="eggNOG" id="COG0091">
    <property type="taxonomic scope" value="Bacteria"/>
</dbReference>
<dbReference type="HOGENOM" id="CLU_083987_3_3_4"/>
<dbReference type="Proteomes" id="UP000002429">
    <property type="component" value="Chromosome"/>
</dbReference>
<dbReference type="GO" id="GO:0022625">
    <property type="term" value="C:cytosolic large ribosomal subunit"/>
    <property type="evidence" value="ECO:0007669"/>
    <property type="project" value="TreeGrafter"/>
</dbReference>
<dbReference type="GO" id="GO:0019843">
    <property type="term" value="F:rRNA binding"/>
    <property type="evidence" value="ECO:0007669"/>
    <property type="project" value="UniProtKB-UniRule"/>
</dbReference>
<dbReference type="GO" id="GO:0003735">
    <property type="term" value="F:structural constituent of ribosome"/>
    <property type="evidence" value="ECO:0007669"/>
    <property type="project" value="InterPro"/>
</dbReference>
<dbReference type="GO" id="GO:0006412">
    <property type="term" value="P:translation"/>
    <property type="evidence" value="ECO:0007669"/>
    <property type="project" value="UniProtKB-UniRule"/>
</dbReference>
<dbReference type="CDD" id="cd00336">
    <property type="entry name" value="Ribosomal_L22"/>
    <property type="match status" value="1"/>
</dbReference>
<dbReference type="FunFam" id="3.90.470.10:FF:000001">
    <property type="entry name" value="50S ribosomal protein L22"/>
    <property type="match status" value="1"/>
</dbReference>
<dbReference type="Gene3D" id="3.90.470.10">
    <property type="entry name" value="Ribosomal protein L22/L17"/>
    <property type="match status" value="1"/>
</dbReference>
<dbReference type="HAMAP" id="MF_01331_B">
    <property type="entry name" value="Ribosomal_uL22_B"/>
    <property type="match status" value="1"/>
</dbReference>
<dbReference type="InterPro" id="IPR001063">
    <property type="entry name" value="Ribosomal_uL22"/>
</dbReference>
<dbReference type="InterPro" id="IPR005727">
    <property type="entry name" value="Ribosomal_uL22_bac/chlpt-type"/>
</dbReference>
<dbReference type="InterPro" id="IPR047867">
    <property type="entry name" value="Ribosomal_uL22_bac/org-type"/>
</dbReference>
<dbReference type="InterPro" id="IPR018260">
    <property type="entry name" value="Ribosomal_uL22_CS"/>
</dbReference>
<dbReference type="InterPro" id="IPR036394">
    <property type="entry name" value="Ribosomal_uL22_sf"/>
</dbReference>
<dbReference type="NCBIfam" id="TIGR01044">
    <property type="entry name" value="rplV_bact"/>
    <property type="match status" value="1"/>
</dbReference>
<dbReference type="PANTHER" id="PTHR13501">
    <property type="entry name" value="CHLOROPLAST 50S RIBOSOMAL PROTEIN L22-RELATED"/>
    <property type="match status" value="1"/>
</dbReference>
<dbReference type="PANTHER" id="PTHR13501:SF8">
    <property type="entry name" value="LARGE RIBOSOMAL SUBUNIT PROTEIN UL22M"/>
    <property type="match status" value="1"/>
</dbReference>
<dbReference type="Pfam" id="PF00237">
    <property type="entry name" value="Ribosomal_L22"/>
    <property type="match status" value="1"/>
</dbReference>
<dbReference type="SUPFAM" id="SSF54843">
    <property type="entry name" value="Ribosomal protein L22"/>
    <property type="match status" value="1"/>
</dbReference>
<dbReference type="PROSITE" id="PS00464">
    <property type="entry name" value="RIBOSOMAL_L22"/>
    <property type="match status" value="1"/>
</dbReference>
<sequence length="109" mass="11900">MEVKAIHRGARISAQKTRLVADQIRGLPIERALNILAFSPKKAAGIVKKVVESAIANAEHNEGADIDELKVKSIFVDKATSLKRFTARAKGRGNRIEKQTCHITVTLGN</sequence>